<feature type="chain" id="PRO_0000181893" description="Ribosome maturation factor RimP">
    <location>
        <begin position="1"/>
        <end position="183"/>
    </location>
</feature>
<gene>
    <name evidence="1" type="primary">rimP</name>
    <name type="ordered locus">BQ2027_MB2867C</name>
</gene>
<name>RIMP_MYCBO</name>
<protein>
    <recommendedName>
        <fullName evidence="1">Ribosome maturation factor RimP</fullName>
    </recommendedName>
</protein>
<comment type="function">
    <text evidence="1">Required for maturation of 30S ribosomal subunits.</text>
</comment>
<comment type="subcellular location">
    <subcellularLocation>
        <location evidence="1">Cytoplasm</location>
    </subcellularLocation>
</comment>
<comment type="similarity">
    <text evidence="1">Belongs to the RimP family.</text>
</comment>
<evidence type="ECO:0000255" key="1">
    <source>
        <dbReference type="HAMAP-Rule" id="MF_01077"/>
    </source>
</evidence>
<proteinExistence type="inferred from homology"/>
<reference key="1">
    <citation type="journal article" date="2003" name="Proc. Natl. Acad. Sci. U.S.A.">
        <title>The complete genome sequence of Mycobacterium bovis.</title>
        <authorList>
            <person name="Garnier T."/>
            <person name="Eiglmeier K."/>
            <person name="Camus J.-C."/>
            <person name="Medina N."/>
            <person name="Mansoor H."/>
            <person name="Pryor M."/>
            <person name="Duthoy S."/>
            <person name="Grondin S."/>
            <person name="Lacroix C."/>
            <person name="Monsempe C."/>
            <person name="Simon S."/>
            <person name="Harris B."/>
            <person name="Atkin R."/>
            <person name="Doggett J."/>
            <person name="Mayes R."/>
            <person name="Keating L."/>
            <person name="Wheeler P.R."/>
            <person name="Parkhill J."/>
            <person name="Barrell B.G."/>
            <person name="Cole S.T."/>
            <person name="Gordon S.V."/>
            <person name="Hewinson R.G."/>
        </authorList>
    </citation>
    <scope>NUCLEOTIDE SEQUENCE [LARGE SCALE GENOMIC DNA]</scope>
    <source>
        <strain>ATCC BAA-935 / AF2122/97</strain>
    </source>
</reference>
<reference key="2">
    <citation type="journal article" date="2017" name="Genome Announc.">
        <title>Updated reference genome sequence and annotation of Mycobacterium bovis AF2122/97.</title>
        <authorList>
            <person name="Malone K.M."/>
            <person name="Farrell D."/>
            <person name="Stuber T.P."/>
            <person name="Schubert O.T."/>
            <person name="Aebersold R."/>
            <person name="Robbe-Austerman S."/>
            <person name="Gordon S.V."/>
        </authorList>
    </citation>
    <scope>NUCLEOTIDE SEQUENCE [LARGE SCALE GENOMIC DNA]</scope>
    <scope>GENOME REANNOTATION</scope>
    <source>
        <strain>ATCC BAA-935 / AF2122/97</strain>
    </source>
</reference>
<accession>P67215</accession>
<accession>A0A1R3Y2I4</accession>
<accession>O05817</accession>
<accession>X2BM18</accession>
<organism>
    <name type="scientific">Mycobacterium bovis (strain ATCC BAA-935 / AF2122/97)</name>
    <dbReference type="NCBI Taxonomy" id="233413"/>
    <lineage>
        <taxon>Bacteria</taxon>
        <taxon>Bacillati</taxon>
        <taxon>Actinomycetota</taxon>
        <taxon>Actinomycetes</taxon>
        <taxon>Mycobacteriales</taxon>
        <taxon>Mycobacteriaceae</taxon>
        <taxon>Mycobacterium</taxon>
        <taxon>Mycobacterium tuberculosis complex</taxon>
    </lineage>
</organism>
<dbReference type="EMBL" id="LT708304">
    <property type="protein sequence ID" value="SIU01487.1"/>
    <property type="molecule type" value="Genomic_DNA"/>
</dbReference>
<dbReference type="RefSeq" id="NP_856512.1">
    <property type="nucleotide sequence ID" value="NC_002945.3"/>
</dbReference>
<dbReference type="RefSeq" id="WP_003899507.1">
    <property type="nucleotide sequence ID" value="NC_002945.4"/>
</dbReference>
<dbReference type="SMR" id="P67215"/>
<dbReference type="GeneID" id="45426829"/>
<dbReference type="KEGG" id="mbo:BQ2027_MB2867C"/>
<dbReference type="PATRIC" id="fig|233413.5.peg.3145"/>
<dbReference type="Proteomes" id="UP000001419">
    <property type="component" value="Chromosome"/>
</dbReference>
<dbReference type="GO" id="GO:0005829">
    <property type="term" value="C:cytosol"/>
    <property type="evidence" value="ECO:0007669"/>
    <property type="project" value="TreeGrafter"/>
</dbReference>
<dbReference type="GO" id="GO:0000028">
    <property type="term" value="P:ribosomal small subunit assembly"/>
    <property type="evidence" value="ECO:0007669"/>
    <property type="project" value="TreeGrafter"/>
</dbReference>
<dbReference type="GO" id="GO:0006412">
    <property type="term" value="P:translation"/>
    <property type="evidence" value="ECO:0007669"/>
    <property type="project" value="TreeGrafter"/>
</dbReference>
<dbReference type="CDD" id="cd01734">
    <property type="entry name" value="YlxS_C"/>
    <property type="match status" value="1"/>
</dbReference>
<dbReference type="Gene3D" id="3.30.300.70">
    <property type="entry name" value="RimP-like superfamily, N-terminal"/>
    <property type="match status" value="1"/>
</dbReference>
<dbReference type="HAMAP" id="MF_01077">
    <property type="entry name" value="RimP"/>
    <property type="match status" value="1"/>
</dbReference>
<dbReference type="InterPro" id="IPR003728">
    <property type="entry name" value="Ribosome_maturation_RimP"/>
</dbReference>
<dbReference type="InterPro" id="IPR028998">
    <property type="entry name" value="RimP_C"/>
</dbReference>
<dbReference type="InterPro" id="IPR036847">
    <property type="entry name" value="RimP_C_sf"/>
</dbReference>
<dbReference type="InterPro" id="IPR028989">
    <property type="entry name" value="RimP_N"/>
</dbReference>
<dbReference type="InterPro" id="IPR035956">
    <property type="entry name" value="RimP_N_sf"/>
</dbReference>
<dbReference type="NCBIfam" id="NF000930">
    <property type="entry name" value="PRK00092.2-2"/>
    <property type="match status" value="1"/>
</dbReference>
<dbReference type="PANTHER" id="PTHR33867">
    <property type="entry name" value="RIBOSOME MATURATION FACTOR RIMP"/>
    <property type="match status" value="1"/>
</dbReference>
<dbReference type="PANTHER" id="PTHR33867:SF1">
    <property type="entry name" value="RIBOSOME MATURATION FACTOR RIMP"/>
    <property type="match status" value="1"/>
</dbReference>
<dbReference type="Pfam" id="PF17384">
    <property type="entry name" value="DUF150_C"/>
    <property type="match status" value="1"/>
</dbReference>
<dbReference type="Pfam" id="PF02576">
    <property type="entry name" value="RimP_N"/>
    <property type="match status" value="1"/>
</dbReference>
<dbReference type="SUPFAM" id="SSF74942">
    <property type="entry name" value="YhbC-like, C-terminal domain"/>
    <property type="match status" value="1"/>
</dbReference>
<dbReference type="SUPFAM" id="SSF75420">
    <property type="entry name" value="YhbC-like, N-terminal domain"/>
    <property type="match status" value="1"/>
</dbReference>
<sequence length="183" mass="19565">MTTGLPSQRQVIELLGADFACAGYEIEDVVIDARARPPRIAVIADGDAPLDLDTIAALSRRASALLDGLDGANKIRGRYLLEVSSPGVERPLTSEKHFRRARGRKVELVLSDGSRLTGRVGEMRAGTVALVIREDRGWAVREIPLAEIVKAVVQVEFSPPAPAELELAQSSEMGLARGTEAGA</sequence>
<keyword id="KW-0963">Cytoplasm</keyword>
<keyword id="KW-1185">Reference proteome</keyword>
<keyword id="KW-0690">Ribosome biogenesis</keyword>